<organismHost>
    <name type="scientific">Homo sapiens</name>
    <name type="common">Human</name>
    <dbReference type="NCBI Taxonomy" id="9606"/>
</organismHost>
<comment type="function">
    <text evidence="1">ATP-dependent DNA 3'-5' helicase required for initiation of viral DNA replication. It forms a complex with the viral E2 protein. The E1-E2 complex binds to the replication origin which contains binding sites for both proteins. During the initial step, a dimer of E1 interacts with a dimer of protein E2 leading to a complex that binds the viral origin of replication with high specificity. Then, a second dimer of E1 displaces the E2 dimer in an ATP-dependent manner to form the E1 tetramer. Following this, two E1 monomers are added to each half of the site, which results in the formation of two E1 trimers on the viral ori. Subsequently, two hexamers will be created. The double hexamer acts as a bi-directional helicase machinery and unwinds the viral DNA and then recruits the host DNA polymerase to start replication.</text>
</comment>
<comment type="catalytic activity">
    <reaction evidence="1">
        <text>Couples ATP hydrolysis with the unwinding of duplex DNA by translocating in the 3'-5' direction.</text>
        <dbReference type="EC" id="5.6.2.4"/>
    </reaction>
</comment>
<comment type="catalytic activity">
    <reaction evidence="1">
        <text>ATP + H2O = ADP + phosphate + H(+)</text>
        <dbReference type="Rhea" id="RHEA:13065"/>
        <dbReference type="ChEBI" id="CHEBI:15377"/>
        <dbReference type="ChEBI" id="CHEBI:15378"/>
        <dbReference type="ChEBI" id="CHEBI:30616"/>
        <dbReference type="ChEBI" id="CHEBI:43474"/>
        <dbReference type="ChEBI" id="CHEBI:456216"/>
        <dbReference type="EC" id="5.6.2.4"/>
    </reaction>
</comment>
<comment type="subunit">
    <text evidence="1">Can form hexamers. Interacts with E2 protein; this interaction increases E1 DNA binding specificity. Interacts with host DNA polymerase subunit POLA2. Interacts with host single stranded DNA-binding protein RPA1. Interacts with host TOP1; this interaction stimulates the enzymatic activity of TOP1.</text>
</comment>
<comment type="subcellular location">
    <subcellularLocation>
        <location evidence="1">Host nucleus</location>
    </subcellularLocation>
</comment>
<comment type="PTM">
    <text evidence="1">Phosphorylated.</text>
</comment>
<comment type="PTM">
    <text evidence="1">Sumoylated.</text>
</comment>
<comment type="similarity">
    <text evidence="1">Belongs to the papillomaviridae E1 protein family.</text>
</comment>
<keyword id="KW-0067">ATP-binding</keyword>
<keyword id="KW-0235">DNA replication</keyword>
<keyword id="KW-0238">DNA-binding</keyword>
<keyword id="KW-0244">Early protein</keyword>
<keyword id="KW-0347">Helicase</keyword>
<keyword id="KW-1048">Host nucleus</keyword>
<keyword id="KW-0378">Hydrolase</keyword>
<keyword id="KW-0413">Isomerase</keyword>
<keyword id="KW-1017">Isopeptide bond</keyword>
<keyword id="KW-0547">Nucleotide-binding</keyword>
<keyword id="KW-0597">Phosphoprotein</keyword>
<keyword id="KW-0832">Ubl conjugation</keyword>
<evidence type="ECO:0000255" key="1">
    <source>
        <dbReference type="HAMAP-Rule" id="MF_04000"/>
    </source>
</evidence>
<evidence type="ECO:0000256" key="2">
    <source>
        <dbReference type="SAM" id="MobiDB-lite"/>
    </source>
</evidence>
<protein>
    <recommendedName>
        <fullName evidence="1">Replication protein E1</fullName>
        <ecNumber evidence="1">5.6.2.4</ecNumber>
    </recommendedName>
    <alternativeName>
        <fullName evidence="1">ATP-dependent helicase E1</fullName>
    </alternativeName>
    <alternativeName>
        <fullName evidence="1">DNA 3'-5' helicase E1</fullName>
    </alternativeName>
</protein>
<accession>P36719</accession>
<organism>
    <name type="scientific">Human papillomavirus 3</name>
    <dbReference type="NCBI Taxonomy" id="10614"/>
    <lineage>
        <taxon>Viruses</taxon>
        <taxon>Monodnaviria</taxon>
        <taxon>Shotokuvirae</taxon>
        <taxon>Cossaviricota</taxon>
        <taxon>Papovaviricetes</taxon>
        <taxon>Zurhausenvirales</taxon>
        <taxon>Papillomaviridae</taxon>
        <taxon>Firstpapillomavirinae</taxon>
        <taxon>Alphapapillomavirus</taxon>
        <taxon>Alphapapillomavirus 2</taxon>
    </lineage>
</organism>
<feature type="chain" id="PRO_0000133099" description="Replication protein E1">
    <location>
        <begin position="1"/>
        <end position="659"/>
    </location>
</feature>
<feature type="domain" description="SF3 helicase" evidence="1">
    <location>
        <begin position="461"/>
        <end position="611"/>
    </location>
</feature>
<feature type="region of interest" description="Disordered" evidence="2">
    <location>
        <begin position="30"/>
        <end position="57"/>
    </location>
</feature>
<feature type="region of interest" description="Disordered" evidence="2">
    <location>
        <begin position="134"/>
        <end position="195"/>
    </location>
</feature>
<feature type="region of interest" description="DNA-binding region" evidence="1">
    <location>
        <begin position="196"/>
        <end position="362"/>
    </location>
</feature>
<feature type="region of interest" description="Disordered" evidence="2">
    <location>
        <begin position="634"/>
        <end position="659"/>
    </location>
</feature>
<feature type="short sequence motif" description="Nuclear localization signal" evidence="1">
    <location>
        <begin position="85"/>
        <end position="87"/>
    </location>
</feature>
<feature type="short sequence motif" description="Nuclear export signal" evidence="1">
    <location>
        <begin position="107"/>
        <end position="116"/>
    </location>
</feature>
<feature type="compositionally biased region" description="Acidic residues" evidence="2">
    <location>
        <begin position="36"/>
        <end position="52"/>
    </location>
</feature>
<feature type="compositionally biased region" description="Polar residues" evidence="2">
    <location>
        <begin position="135"/>
        <end position="160"/>
    </location>
</feature>
<feature type="binding site" evidence="1">
    <location>
        <begin position="487"/>
        <end position="494"/>
    </location>
    <ligand>
        <name>ATP</name>
        <dbReference type="ChEBI" id="CHEBI:30616"/>
    </ligand>
</feature>
<feature type="modified residue" description="Phosphoserine; by host" evidence="1">
    <location>
        <position position="91"/>
    </location>
</feature>
<feature type="modified residue" description="Phosphoserine; by host" evidence="1">
    <location>
        <position position="95"/>
    </location>
</feature>
<feature type="modified residue" description="Phosphoserine; by host" evidence="1">
    <location>
        <position position="108"/>
    </location>
</feature>
<feature type="modified residue" description="Phosphoserine; by host" evidence="1">
    <location>
        <position position="121"/>
    </location>
</feature>
<feature type="cross-link" description="Glycyl lysine isopeptide (Lys-Gly) (interchain with G-Cter in SUMO)" evidence="1">
    <location>
        <position position="568"/>
    </location>
</feature>
<proteinExistence type="inferred from homology"/>
<sequence length="659" mass="74027">MDDTSGTEGECSELERAGGWFMVEAIVDRRTGDTVSSDEDEEEDGGEDLVDFIDDRPVGDGQEVAQELLLQQAAADDDVEVQTVKRKFAPSPYFSPVCVHPSIENELSPRLDAIKLGRQTSKAKRRLFELPDSGYGQTQVDTESGPKQVQDICKTSQQDGCQGADEGRGRNVGGNGSQEEERAGGDGEESQTESVQTDTTACGVLAILKASNHKATLLGKFKEQFGLGFNELIRHFKSNKTVCSDWVVCVFGVYCTLAESFKTLIQPQCEYAHIQVLSCQWGMTVLTLVRFKRAKNRETVAKGFSTLLNVPENHMLIEPPKLRSAPAALYWFKTSLSNCSEVFGETPEWIVRQTVVGHALEEAQFSLSEMVQYAYDHDITDESTLAYEYALQADTDANAAAFLASNCQAKYVKDACTMCRHYKRGEQARMNMSEWIKFRGDKIQGDGDWKPIVQYLRYQDVEFIPFLCALKSFLQGIPKKSCIVFYGPADTGKSYFCMSLLKFLGGVVISYANSSSHFWLQPLAEAKIGLLDDATSQCWCYIDTYLRNALDGNQVCIDRKHRALLQLKCPPLLITTNINPLGDERWKYLRSRLQVFTFNNKFPLTTQGEPLYTLNDQNWKSFFQRLWARLNLTDPEDEEDNGNTSEPFRCVPGQNTRTV</sequence>
<name>VE1_HPV03</name>
<gene>
    <name evidence="1" type="primary">E1</name>
</gene>
<dbReference type="EC" id="5.6.2.4" evidence="1"/>
<dbReference type="EMBL" id="X74462">
    <property type="protein sequence ID" value="CAA52471.1"/>
    <property type="molecule type" value="Genomic_DNA"/>
</dbReference>
<dbReference type="PIR" id="S36551">
    <property type="entry name" value="S36551"/>
</dbReference>
<dbReference type="SMR" id="P36719"/>
<dbReference type="Proteomes" id="UP000007706">
    <property type="component" value="Genome"/>
</dbReference>
<dbReference type="GO" id="GO:0042025">
    <property type="term" value="C:host cell nucleus"/>
    <property type="evidence" value="ECO:0007669"/>
    <property type="project" value="UniProtKB-SubCell"/>
</dbReference>
<dbReference type="GO" id="GO:0005524">
    <property type="term" value="F:ATP binding"/>
    <property type="evidence" value="ECO:0007669"/>
    <property type="project" value="UniProtKB-UniRule"/>
</dbReference>
<dbReference type="GO" id="GO:0016887">
    <property type="term" value="F:ATP hydrolysis activity"/>
    <property type="evidence" value="ECO:0007669"/>
    <property type="project" value="RHEA"/>
</dbReference>
<dbReference type="GO" id="GO:0003677">
    <property type="term" value="F:DNA binding"/>
    <property type="evidence" value="ECO:0007669"/>
    <property type="project" value="UniProtKB-UniRule"/>
</dbReference>
<dbReference type="GO" id="GO:0003678">
    <property type="term" value="F:DNA helicase activity"/>
    <property type="evidence" value="ECO:0007669"/>
    <property type="project" value="UniProtKB-UniRule"/>
</dbReference>
<dbReference type="GO" id="GO:0006260">
    <property type="term" value="P:DNA replication"/>
    <property type="evidence" value="ECO:0007669"/>
    <property type="project" value="UniProtKB-UniRule"/>
</dbReference>
<dbReference type="Gene3D" id="3.40.1310.10">
    <property type="match status" value="1"/>
</dbReference>
<dbReference type="Gene3D" id="3.40.50.300">
    <property type="entry name" value="P-loop containing nucleotide triphosphate hydrolases"/>
    <property type="match status" value="1"/>
</dbReference>
<dbReference type="Gene3D" id="1.10.10.510">
    <property type="entry name" value="Zinc finger, large T-antigen D1 domain"/>
    <property type="match status" value="1"/>
</dbReference>
<dbReference type="HAMAP" id="MF_04000">
    <property type="entry name" value="PPV_E1"/>
    <property type="match status" value="1"/>
</dbReference>
<dbReference type="InterPro" id="IPR014015">
    <property type="entry name" value="Helicase_SF3_DNA-vir"/>
</dbReference>
<dbReference type="InterPro" id="IPR027417">
    <property type="entry name" value="P-loop_NTPase"/>
</dbReference>
<dbReference type="InterPro" id="IPR001177">
    <property type="entry name" value="PPV_DNA_helicase_E1_C"/>
</dbReference>
<dbReference type="InterPro" id="IPR014000">
    <property type="entry name" value="PPV_DNA_helicase_E1_N"/>
</dbReference>
<dbReference type="InterPro" id="IPR046832">
    <property type="entry name" value="PPV_E1_DBD"/>
</dbReference>
<dbReference type="InterPro" id="IPR046935">
    <property type="entry name" value="PPV_E1_DBD_sf"/>
</dbReference>
<dbReference type="InterPro" id="IPR016393">
    <property type="entry name" value="Rep_E1_papillomaV"/>
</dbReference>
<dbReference type="InterPro" id="IPR037102">
    <property type="entry name" value="Znf_lg_T-Ag_D1_dom_sf"/>
</dbReference>
<dbReference type="Pfam" id="PF00519">
    <property type="entry name" value="PPV_E1_C"/>
    <property type="match status" value="1"/>
</dbReference>
<dbReference type="Pfam" id="PF20450">
    <property type="entry name" value="PPV_E1_DBD"/>
    <property type="match status" value="1"/>
</dbReference>
<dbReference type="Pfam" id="PF00524">
    <property type="entry name" value="PPV_E1_N"/>
    <property type="match status" value="1"/>
</dbReference>
<dbReference type="PIRSF" id="PIRSF003383">
    <property type="entry name" value="Rep_E1_papillomaV"/>
    <property type="match status" value="1"/>
</dbReference>
<dbReference type="SUPFAM" id="SSF55464">
    <property type="entry name" value="Origin of replication-binding domain, RBD-like"/>
    <property type="match status" value="1"/>
</dbReference>
<dbReference type="SUPFAM" id="SSF52540">
    <property type="entry name" value="P-loop containing nucleoside triphosphate hydrolases"/>
    <property type="match status" value="1"/>
</dbReference>
<dbReference type="PROSITE" id="PS51206">
    <property type="entry name" value="SF3_HELICASE_1"/>
    <property type="match status" value="1"/>
</dbReference>
<reference key="1">
    <citation type="journal article" date="1994" name="Curr. Top. Microbiol. Immunol.">
        <title>Primer-directed sequencing of human papillomavirus types.</title>
        <authorList>
            <person name="Delius H."/>
            <person name="Hofmann B."/>
        </authorList>
    </citation>
    <scope>NUCLEOTIDE SEQUENCE [GENOMIC DNA]</scope>
</reference>